<protein>
    <recommendedName>
        <fullName evidence="5">Sulfatase</fullName>
        <ecNumber evidence="6">3.1.6.-</ecNumber>
    </recommendedName>
    <alternativeName>
        <fullName evidence="4">Arylsulfatase</fullName>
    </alternativeName>
    <alternativeName>
        <fullName evidence="4">Polysaccharide utilization locus H protein P13</fullName>
        <shortName>PUL H protein P13</shortName>
    </alternativeName>
    <alternativeName>
        <fullName evidence="5">Sulfatase family S1 subfamily 16 protein P13</fullName>
        <shortName evidence="4">P13_S1_16</shortName>
    </alternativeName>
</protein>
<accession>T2KPJ9</accession>
<organism>
    <name type="scientific">Formosa agariphila (strain DSM 15362 / KCTC 12365 / LMG 23005 / KMM 3901 / M-2Alg 35-1)</name>
    <dbReference type="NCBI Taxonomy" id="1347342"/>
    <lineage>
        <taxon>Bacteria</taxon>
        <taxon>Pseudomonadati</taxon>
        <taxon>Bacteroidota</taxon>
        <taxon>Flavobacteriia</taxon>
        <taxon>Flavobacteriales</taxon>
        <taxon>Flavobacteriaceae</taxon>
        <taxon>Formosa</taxon>
    </lineage>
</organism>
<dbReference type="EC" id="3.1.6.-" evidence="6"/>
<dbReference type="EMBL" id="HG315671">
    <property type="protein sequence ID" value="CDF79914.1"/>
    <property type="molecule type" value="Genomic_DNA"/>
</dbReference>
<dbReference type="SMR" id="T2KPJ9"/>
<dbReference type="STRING" id="1347342.BN863_22020"/>
<dbReference type="PATRIC" id="fig|1347342.6.peg.2209"/>
<dbReference type="eggNOG" id="COG3119">
    <property type="taxonomic scope" value="Bacteria"/>
</dbReference>
<dbReference type="HOGENOM" id="CLU_006332_10_4_10"/>
<dbReference type="Proteomes" id="UP000016160">
    <property type="component" value="Chromosome"/>
</dbReference>
<dbReference type="GO" id="GO:0005576">
    <property type="term" value="C:extracellular region"/>
    <property type="evidence" value="ECO:0007669"/>
    <property type="project" value="UniProtKB-SubCell"/>
</dbReference>
<dbReference type="GO" id="GO:0004065">
    <property type="term" value="F:arylsulfatase activity"/>
    <property type="evidence" value="ECO:0007669"/>
    <property type="project" value="TreeGrafter"/>
</dbReference>
<dbReference type="GO" id="GO:0046872">
    <property type="term" value="F:metal ion binding"/>
    <property type="evidence" value="ECO:0007669"/>
    <property type="project" value="UniProtKB-KW"/>
</dbReference>
<dbReference type="CDD" id="cd16144">
    <property type="entry name" value="ARS_like"/>
    <property type="match status" value="1"/>
</dbReference>
<dbReference type="Gene3D" id="3.40.720.10">
    <property type="entry name" value="Alkaline Phosphatase, subunit A"/>
    <property type="match status" value="2"/>
</dbReference>
<dbReference type="InterPro" id="IPR017850">
    <property type="entry name" value="Alkaline_phosphatase_core_sf"/>
</dbReference>
<dbReference type="InterPro" id="IPR050738">
    <property type="entry name" value="Sulfatase"/>
</dbReference>
<dbReference type="InterPro" id="IPR000917">
    <property type="entry name" value="Sulfatase_N"/>
</dbReference>
<dbReference type="PANTHER" id="PTHR42693">
    <property type="entry name" value="ARYLSULFATASE FAMILY MEMBER"/>
    <property type="match status" value="1"/>
</dbReference>
<dbReference type="PANTHER" id="PTHR42693:SF42">
    <property type="entry name" value="ARYLSULFATASE G"/>
    <property type="match status" value="1"/>
</dbReference>
<dbReference type="Pfam" id="PF00884">
    <property type="entry name" value="Sulfatase"/>
    <property type="match status" value="1"/>
</dbReference>
<dbReference type="SUPFAM" id="SSF53649">
    <property type="entry name" value="Alkaline phosphatase-like"/>
    <property type="match status" value="1"/>
</dbReference>
<name>PLH13_FORAG</name>
<reference key="1">
    <citation type="journal article" date="2013" name="Appl. Environ. Microbiol.">
        <title>The genome of the alga-associated marine flavobacterium Formosa agariphila KMM 3901T reveals a broad potential for degradation of algal polysaccharides.</title>
        <authorList>
            <person name="Mann A.J."/>
            <person name="Hahnke R.L."/>
            <person name="Huang S."/>
            <person name="Werner J."/>
            <person name="Xing P."/>
            <person name="Barbeyron T."/>
            <person name="Huettel B."/>
            <person name="Stueber K."/>
            <person name="Reinhardt R."/>
            <person name="Harder J."/>
            <person name="Gloeckner F.O."/>
            <person name="Amann R.I."/>
            <person name="Teeling H."/>
        </authorList>
    </citation>
    <scope>NUCLEOTIDE SEQUENCE [LARGE SCALE GENOMIC DNA]</scope>
    <source>
        <strain>DSM 15362 / KCTC 12365 / LMG 23005 / KMM 3901 / M-2Alg 35-1</strain>
    </source>
</reference>
<reference key="2">
    <citation type="journal article" date="2019" name="Nat. Chem. Biol.">
        <title>A marine bacterial enzymatic cascade degrades the algal polysaccharide ulvan.</title>
        <authorList>
            <person name="Reisky L."/>
            <person name="Prechoux A."/>
            <person name="Zuehlke M.K."/>
            <person name="Baeumgen M."/>
            <person name="Robb C.S."/>
            <person name="Gerlach N."/>
            <person name="Roret T."/>
            <person name="Stanetty C."/>
            <person name="Larocque R."/>
            <person name="Michel G."/>
            <person name="Song T."/>
            <person name="Markert S."/>
            <person name="Unfried F."/>
            <person name="Mihovilovic M.D."/>
            <person name="Trautwein-Schult A."/>
            <person name="Becher D."/>
            <person name="Schweder T."/>
            <person name="Bornscheuer U.T."/>
            <person name="Hehemann J.H."/>
        </authorList>
    </citation>
    <scope>FUNCTION</scope>
    <scope>SUBCELLULAR LOCATION</scope>
</reference>
<evidence type="ECO:0000250" key="1">
    <source>
        <dbReference type="UniProtKB" id="P15289"/>
    </source>
</evidence>
<evidence type="ECO:0000255" key="2"/>
<evidence type="ECO:0000269" key="3">
    <source>
    </source>
</evidence>
<evidence type="ECO:0000303" key="4">
    <source>
    </source>
</evidence>
<evidence type="ECO:0000305" key="5"/>
<evidence type="ECO:0000305" key="6">
    <source>
    </source>
</evidence>
<feature type="signal peptide" evidence="2">
    <location>
        <begin position="1"/>
        <end position="25"/>
    </location>
</feature>
<feature type="chain" id="PRO_5004591149" description="Sulfatase">
    <location>
        <begin position="26"/>
        <end position="553"/>
    </location>
</feature>
<feature type="active site" description="Nucleophile" evidence="1">
    <location>
        <position position="88"/>
    </location>
</feature>
<feature type="active site" evidence="1">
    <location>
        <position position="159"/>
    </location>
</feature>
<feature type="binding site" evidence="1">
    <location>
        <position position="43"/>
    </location>
    <ligand>
        <name>Ca(2+)</name>
        <dbReference type="ChEBI" id="CHEBI:29108"/>
    </ligand>
</feature>
<feature type="binding site" evidence="1">
    <location>
        <position position="44"/>
    </location>
    <ligand>
        <name>Ca(2+)</name>
        <dbReference type="ChEBI" id="CHEBI:29108"/>
    </ligand>
</feature>
<feature type="binding site" description="via 3-oxoalanine" evidence="1">
    <location>
        <position position="88"/>
    </location>
    <ligand>
        <name>Ca(2+)</name>
        <dbReference type="ChEBI" id="CHEBI:29108"/>
    </ligand>
</feature>
<feature type="binding site" evidence="1">
    <location>
        <position position="350"/>
    </location>
    <ligand>
        <name>Ca(2+)</name>
        <dbReference type="ChEBI" id="CHEBI:29108"/>
    </ligand>
</feature>
<feature type="binding site" evidence="1">
    <location>
        <position position="351"/>
    </location>
    <ligand>
        <name>Ca(2+)</name>
        <dbReference type="ChEBI" id="CHEBI:29108"/>
    </ligand>
</feature>
<feature type="modified residue" description="3-oxoalanine (Cys)" evidence="1">
    <location>
        <position position="88"/>
    </location>
</feature>
<comment type="function">
    <text evidence="6">Sulfatase that may be involved in ulvan degradation (Probable). Ulvan is the main polysaccharide component of the Ulvales (green seaweed) cell wall. It is composed of disaccharide building blocks comprising 3-sulfated rhamnose (Rha3S) linked to D-glucuronic acid (GlcA), L-iduronic acid (IduA), or D-xylose (Xyl) (Probable).</text>
</comment>
<comment type="cofactor">
    <cofactor evidence="1">
        <name>Ca(2+)</name>
        <dbReference type="ChEBI" id="CHEBI:29108"/>
    </cofactor>
    <text evidence="1">Binds 1 Ca(2+) ion per subunit.</text>
</comment>
<comment type="subcellular location">
    <subcellularLocation>
        <location evidence="3">Secreted</location>
    </subcellularLocation>
</comment>
<comment type="PTM">
    <text evidence="1">The conversion to 3-oxoalanine (also known as C-formylglycine, FGly), of a serine or cysteine residue in prokaryotes and of a cysteine residue in eukaryotes, is critical for catalytic activity. This post-translational modification is severely defective in multiple sulfatase deficiency (MSD).</text>
</comment>
<comment type="similarity">
    <text evidence="5">Belongs to the sulfatase family.</text>
</comment>
<proteinExistence type="inferred from homology"/>
<gene>
    <name type="ORF">BN863_22020</name>
</gene>
<keyword id="KW-0106">Calcium</keyword>
<keyword id="KW-0378">Hydrolase</keyword>
<keyword id="KW-0479">Metal-binding</keyword>
<keyword id="KW-1185">Reference proteome</keyword>
<keyword id="KW-0964">Secreted</keyword>
<keyword id="KW-0732">Signal</keyword>
<sequence length="553" mass="62087">MTSEMKKFSKIVLFGLLISPLLASSQTKKDANQKPNIILIMADDLGWTDLSSPNTSLGYGSKYYESPNIDRLAQQGKSFAYAYTQQNCQPTRAALLSGQYATGAQNGVYNVGSLKRASKGVVTPIMPHNQNNYLQEDCVSMFETLKTAGYHTAWFGKFHAIKLGKQAESYMGVDYNVALHKETSATVNGVKVKNEFFAQNDDAKGWMFEIDNLKPYAQPYDAAYLQKVLEPIKNGNNPWLLEGTPKHLTDALGDAVVGYIKDRSKADSPFFAYIPFHAVHVSILPRLDLEAKYKAKKSLDPRHTQADYAAFVELLDQTVGRVLNALEDPNGDGNKADGIAENTMVIFYSDNGGFMGPTNNSPLRLRKGTYYEGGVRVPLIFKYPGVITPNSVNTTQEVHTIDFYPTLAEIAGAKLPSPKVQEMDGKSIASVLREESQVRDDKNELFWHFPGYMDVRNMPQSVIHYRHSDNQHYKLFYRYEDESFELYNLSNDLGETTNLLAENPSQQTLDLALKMNNKLRAWLIKNNAPTGIWAKNCEKVPYPKKDAVKKYIK</sequence>